<gene>
    <name type="primary">GUCA1B</name>
    <name type="synonym">GCAP2</name>
</gene>
<keyword id="KW-0106">Calcium</keyword>
<keyword id="KW-0449">Lipoprotein</keyword>
<keyword id="KW-0479">Metal-binding</keyword>
<keyword id="KW-0519">Myristate</keyword>
<keyword id="KW-1185">Reference proteome</keyword>
<keyword id="KW-0677">Repeat</keyword>
<keyword id="KW-0716">Sensory transduction</keyword>
<keyword id="KW-0844">Vision</keyword>
<accession>P79881</accession>
<dbReference type="EMBL" id="S82200">
    <property type="protein sequence ID" value="AAB47112.1"/>
    <property type="molecule type" value="mRNA"/>
</dbReference>
<dbReference type="EMBL" id="AF172708">
    <property type="protein sequence ID" value="AAD47880.1"/>
    <property type="molecule type" value="Genomic_DNA"/>
</dbReference>
<dbReference type="PIR" id="S68839">
    <property type="entry name" value="S68839"/>
</dbReference>
<dbReference type="RefSeq" id="NP_001007882.1">
    <property type="nucleotide sequence ID" value="NM_001007881.2"/>
</dbReference>
<dbReference type="SMR" id="P79881"/>
<dbReference type="FunCoup" id="P79881">
    <property type="interactions" value="14"/>
</dbReference>
<dbReference type="STRING" id="9031.ENSGALP00000034499"/>
<dbReference type="PaxDb" id="9031-ENSGALP00000034499"/>
<dbReference type="Ensembl" id="ENSGALT00010065998.1">
    <property type="protein sequence ID" value="ENSGALP00010040264.1"/>
    <property type="gene ID" value="ENSGALG00010027222.1"/>
</dbReference>
<dbReference type="GeneID" id="419864"/>
<dbReference type="KEGG" id="gga:419864"/>
<dbReference type="CTD" id="2979"/>
<dbReference type="VEuPathDB" id="HostDB:geneid_419864"/>
<dbReference type="eggNOG" id="KOG0044">
    <property type="taxonomic scope" value="Eukaryota"/>
</dbReference>
<dbReference type="GeneTree" id="ENSGT00940000157530"/>
<dbReference type="HOGENOM" id="CLU_072366_4_0_1"/>
<dbReference type="InParanoid" id="P79881"/>
<dbReference type="OMA" id="LRWTFKI"/>
<dbReference type="OrthoDB" id="191686at2759"/>
<dbReference type="PhylomeDB" id="P79881"/>
<dbReference type="TreeFam" id="TF333971"/>
<dbReference type="Reactome" id="R-GGA-2514859">
    <property type="pathway name" value="Inactivation, recovery and regulation of the phototransduction cascade"/>
</dbReference>
<dbReference type="PRO" id="PR:P79881"/>
<dbReference type="Proteomes" id="UP000000539">
    <property type="component" value="Chromosome 26"/>
</dbReference>
<dbReference type="Bgee" id="ENSGALG00000001418">
    <property type="expression patterns" value="Expressed in testis and 2 other cell types or tissues"/>
</dbReference>
<dbReference type="GO" id="GO:0120199">
    <property type="term" value="C:cone photoreceptor outer segment"/>
    <property type="evidence" value="ECO:0000318"/>
    <property type="project" value="GO_Central"/>
</dbReference>
<dbReference type="GO" id="GO:0001917">
    <property type="term" value="C:photoreceptor inner segment"/>
    <property type="evidence" value="ECO:0000318"/>
    <property type="project" value="GO_Central"/>
</dbReference>
<dbReference type="GO" id="GO:0005509">
    <property type="term" value="F:calcium ion binding"/>
    <property type="evidence" value="ECO:0000318"/>
    <property type="project" value="GO_Central"/>
</dbReference>
<dbReference type="GO" id="GO:0008048">
    <property type="term" value="F:calcium sensitive guanylate cyclase activator activity"/>
    <property type="evidence" value="ECO:0000318"/>
    <property type="project" value="GO_Central"/>
</dbReference>
<dbReference type="GO" id="GO:0009966">
    <property type="term" value="P:regulation of signal transduction"/>
    <property type="evidence" value="ECO:0000318"/>
    <property type="project" value="GO_Central"/>
</dbReference>
<dbReference type="GO" id="GO:0007601">
    <property type="term" value="P:visual perception"/>
    <property type="evidence" value="ECO:0000318"/>
    <property type="project" value="GO_Central"/>
</dbReference>
<dbReference type="CDD" id="cd00051">
    <property type="entry name" value="EFh"/>
    <property type="match status" value="2"/>
</dbReference>
<dbReference type="FunFam" id="1.10.238.10:FF:000052">
    <property type="entry name" value="Guanylate cyclase activator 1A"/>
    <property type="match status" value="1"/>
</dbReference>
<dbReference type="Gene3D" id="1.10.238.10">
    <property type="entry name" value="EF-hand"/>
    <property type="match status" value="2"/>
</dbReference>
<dbReference type="InterPro" id="IPR011992">
    <property type="entry name" value="EF-hand-dom_pair"/>
</dbReference>
<dbReference type="InterPro" id="IPR018247">
    <property type="entry name" value="EF_Hand_1_Ca_BS"/>
</dbReference>
<dbReference type="InterPro" id="IPR002048">
    <property type="entry name" value="EF_hand_dom"/>
</dbReference>
<dbReference type="InterPro" id="IPR028846">
    <property type="entry name" value="Recoverin"/>
</dbReference>
<dbReference type="PANTHER" id="PTHR23055">
    <property type="entry name" value="CALCIUM BINDING PROTEINS"/>
    <property type="match status" value="1"/>
</dbReference>
<dbReference type="PANTHER" id="PTHR23055:SF11">
    <property type="entry name" value="GUANYLYL CYCLASE-ACTIVATING PROTEIN 2"/>
    <property type="match status" value="1"/>
</dbReference>
<dbReference type="Pfam" id="PF00036">
    <property type="entry name" value="EF-hand_1"/>
    <property type="match status" value="1"/>
</dbReference>
<dbReference type="Pfam" id="PF13499">
    <property type="entry name" value="EF-hand_7"/>
    <property type="match status" value="1"/>
</dbReference>
<dbReference type="PRINTS" id="PR00450">
    <property type="entry name" value="RECOVERIN"/>
</dbReference>
<dbReference type="SMART" id="SM00054">
    <property type="entry name" value="EFh"/>
    <property type="match status" value="3"/>
</dbReference>
<dbReference type="SUPFAM" id="SSF47473">
    <property type="entry name" value="EF-hand"/>
    <property type="match status" value="1"/>
</dbReference>
<dbReference type="PROSITE" id="PS00018">
    <property type="entry name" value="EF_HAND_1"/>
    <property type="match status" value="3"/>
</dbReference>
<dbReference type="PROSITE" id="PS50222">
    <property type="entry name" value="EF_HAND_2"/>
    <property type="match status" value="3"/>
</dbReference>
<feature type="initiator methionine" description="Removed" evidence="3">
    <location>
        <position position="1"/>
    </location>
</feature>
<feature type="chain" id="PRO_0000073810" description="Guanylyl cyclase-activating protein 2">
    <location>
        <begin position="2"/>
        <end position="198"/>
    </location>
</feature>
<feature type="domain" description="EF-hand 1" evidence="6">
    <location>
        <begin position="16"/>
        <end position="51"/>
    </location>
</feature>
<feature type="domain" description="EF-hand 2" evidence="4">
    <location>
        <begin position="52"/>
        <end position="87"/>
    </location>
</feature>
<feature type="domain" description="EF-hand 3" evidence="4">
    <location>
        <begin position="88"/>
        <end position="123"/>
    </location>
</feature>
<feature type="domain" description="EF-hand 4" evidence="4">
    <location>
        <begin position="139"/>
        <end position="174"/>
    </location>
</feature>
<feature type="binding site" evidence="4">
    <location>
        <position position="65"/>
    </location>
    <ligand>
        <name>Ca(2+)</name>
        <dbReference type="ChEBI" id="CHEBI:29108"/>
        <label>1</label>
    </ligand>
</feature>
<feature type="binding site" evidence="4">
    <location>
        <position position="67"/>
    </location>
    <ligand>
        <name>Ca(2+)</name>
        <dbReference type="ChEBI" id="CHEBI:29108"/>
        <label>1</label>
    </ligand>
</feature>
<feature type="binding site" evidence="4">
    <location>
        <position position="69"/>
    </location>
    <ligand>
        <name>Ca(2+)</name>
        <dbReference type="ChEBI" id="CHEBI:29108"/>
        <label>1</label>
    </ligand>
</feature>
<feature type="binding site" evidence="4">
    <location>
        <position position="71"/>
    </location>
    <ligand>
        <name>Ca(2+)</name>
        <dbReference type="ChEBI" id="CHEBI:29108"/>
        <label>1</label>
    </ligand>
</feature>
<feature type="binding site" evidence="4">
    <location>
        <position position="76"/>
    </location>
    <ligand>
        <name>Ca(2+)</name>
        <dbReference type="ChEBI" id="CHEBI:29108"/>
        <label>1</label>
    </ligand>
</feature>
<feature type="binding site" evidence="4">
    <location>
        <position position="101"/>
    </location>
    <ligand>
        <name>Ca(2+)</name>
        <dbReference type="ChEBI" id="CHEBI:29108"/>
        <label>2</label>
    </ligand>
</feature>
<feature type="binding site" evidence="4">
    <location>
        <position position="103"/>
    </location>
    <ligand>
        <name>Ca(2+)</name>
        <dbReference type="ChEBI" id="CHEBI:29108"/>
        <label>2</label>
    </ligand>
</feature>
<feature type="binding site" evidence="4">
    <location>
        <position position="105"/>
    </location>
    <ligand>
        <name>Ca(2+)</name>
        <dbReference type="ChEBI" id="CHEBI:29108"/>
        <label>2</label>
    </ligand>
</feature>
<feature type="binding site" evidence="4">
    <location>
        <position position="107"/>
    </location>
    <ligand>
        <name>Ca(2+)</name>
        <dbReference type="ChEBI" id="CHEBI:29108"/>
        <label>2</label>
    </ligand>
</feature>
<feature type="binding site" evidence="4">
    <location>
        <position position="112"/>
    </location>
    <ligand>
        <name>Ca(2+)</name>
        <dbReference type="ChEBI" id="CHEBI:29108"/>
        <label>2</label>
    </ligand>
</feature>
<feature type="binding site" evidence="4">
    <location>
        <position position="152"/>
    </location>
    <ligand>
        <name>Ca(2+)</name>
        <dbReference type="ChEBI" id="CHEBI:29108"/>
        <label>3</label>
    </ligand>
</feature>
<feature type="binding site" evidence="4">
    <location>
        <position position="154"/>
    </location>
    <ligand>
        <name>Ca(2+)</name>
        <dbReference type="ChEBI" id="CHEBI:29108"/>
        <label>3</label>
    </ligand>
</feature>
<feature type="binding site" evidence="4">
    <location>
        <position position="156"/>
    </location>
    <ligand>
        <name>Ca(2+)</name>
        <dbReference type="ChEBI" id="CHEBI:29108"/>
        <label>3</label>
    </ligand>
</feature>
<feature type="binding site" evidence="4">
    <location>
        <position position="158"/>
    </location>
    <ligand>
        <name>Ca(2+)</name>
        <dbReference type="ChEBI" id="CHEBI:29108"/>
        <label>3</label>
    </ligand>
</feature>
<feature type="binding site" evidence="4">
    <location>
        <position position="163"/>
    </location>
    <ligand>
        <name>Ca(2+)</name>
        <dbReference type="ChEBI" id="CHEBI:29108"/>
        <label>3</label>
    </ligand>
</feature>
<feature type="lipid moiety-binding region" description="N-myristoyl glycine" evidence="3">
    <location>
        <position position="2"/>
    </location>
</feature>
<name>GUC1B_CHICK</name>
<reference key="1">
    <citation type="journal article" date="1996" name="FEBS Lett.">
        <title>Expression of GCAP1 and GCAP2 in the retinal degeneration (rd) mutant chicken retina.</title>
        <authorList>
            <person name="Semple-Rowland S.L."/>
            <person name="Gorczyca W.A."/>
            <person name="Buczylko J."/>
            <person name="Helekar B.S."/>
            <person name="Ruiz C.C."/>
            <person name="Subbaraya I."/>
            <person name="Palczewski K."/>
            <person name="Baehr W."/>
        </authorList>
    </citation>
    <scope>NUCLEOTIDE SEQUENCE [MRNA]</scope>
    <source>
        <tissue>Retina</tissue>
    </source>
</reference>
<reference key="2">
    <citation type="journal article" date="1999" name="Mol. Vis.">
        <title>Characterization of the chicken GCAP gene array and analyses of GCAP1, GCAP2, and GC1 gene expression in normal and rd chicken pineal.</title>
        <authorList>
            <person name="Semple-Rowland S.L."/>
            <person name="Larkin P."/>
            <person name="Bronson J.D."/>
            <person name="Nykamp K."/>
            <person name="Streit W.J."/>
            <person name="Baehr W."/>
        </authorList>
    </citation>
    <scope>NUCLEOTIDE SEQUENCE [GENOMIC DNA]</scope>
    <scope>TISSUE SPECIFICITY</scope>
    <source>
        <strain>White leghorn</strain>
        <tissue>Liver</tissue>
    </source>
</reference>
<sequence length="198" mass="23128">MGQQFTNAEGEQTEIDVAELQEWYKKFVVECPSGTLFMHEFKRFFGVQDNHEAAEYIENMFRAFDKNGDNTIDFLEYVAALNLVLRGKLEHKLRWTFKVYDKDGNGCIDKPELLEIVESIYKLKKVCRSEVEERTPLLTPEEVVDRIFQLVDENGDGQLSLDEFIDGARKDKWVMKMLQMDVNPGGWISEQRRKSALF</sequence>
<comment type="function">
    <text evidence="2">Stimulates synthesis of cGMP in photoreceptors. Thought to mediate Ca(2+)-sensitive regulation of retinal guanylyl cyclase (GC), a key event in recovery of the dark state of rod photoreceptors following light exposure (By similarity).</text>
</comment>
<comment type="subunit">
    <text>Undergoes dimerization at low calcium ions concentration, while the presence of calcium ions inhibits its dimerization. Dimerization correlates with its ability to activate GC.</text>
</comment>
<comment type="tissue specificity">
    <text evidence="5">Retina and pineal gland.</text>
</comment>
<comment type="miscellaneous">
    <text evidence="1">Binds three calcium ions.</text>
</comment>
<evidence type="ECO:0000250" key="1"/>
<evidence type="ECO:0000250" key="2">
    <source>
        <dbReference type="UniProtKB" id="P51177"/>
    </source>
</evidence>
<evidence type="ECO:0000255" key="3"/>
<evidence type="ECO:0000255" key="4">
    <source>
        <dbReference type="PROSITE-ProRule" id="PRU00448"/>
    </source>
</evidence>
<evidence type="ECO:0000269" key="5">
    <source>
    </source>
</evidence>
<evidence type="ECO:0000305" key="6"/>
<protein>
    <recommendedName>
        <fullName>Guanylyl cyclase-activating protein 2</fullName>
        <shortName>GCAP 2</shortName>
    </recommendedName>
    <alternativeName>
        <fullName>Guanylate cyclase activator 1B</fullName>
    </alternativeName>
</protein>
<organism>
    <name type="scientific">Gallus gallus</name>
    <name type="common">Chicken</name>
    <dbReference type="NCBI Taxonomy" id="9031"/>
    <lineage>
        <taxon>Eukaryota</taxon>
        <taxon>Metazoa</taxon>
        <taxon>Chordata</taxon>
        <taxon>Craniata</taxon>
        <taxon>Vertebrata</taxon>
        <taxon>Euteleostomi</taxon>
        <taxon>Archelosauria</taxon>
        <taxon>Archosauria</taxon>
        <taxon>Dinosauria</taxon>
        <taxon>Saurischia</taxon>
        <taxon>Theropoda</taxon>
        <taxon>Coelurosauria</taxon>
        <taxon>Aves</taxon>
        <taxon>Neognathae</taxon>
        <taxon>Galloanserae</taxon>
        <taxon>Galliformes</taxon>
        <taxon>Phasianidae</taxon>
        <taxon>Phasianinae</taxon>
        <taxon>Gallus</taxon>
    </lineage>
</organism>
<proteinExistence type="evidence at transcript level"/>